<gene>
    <name type="primary">COX8A</name>
    <name type="synonym">COX8</name>
    <name type="synonym">COX8L</name>
</gene>
<keyword id="KW-0472">Membrane</keyword>
<keyword id="KW-0496">Mitochondrion</keyword>
<keyword id="KW-0999">Mitochondrion inner membrane</keyword>
<keyword id="KW-1185">Reference proteome</keyword>
<keyword id="KW-0809">Transit peptide</keyword>
<keyword id="KW-0812">Transmembrane</keyword>
<keyword id="KW-1133">Transmembrane helix</keyword>
<keyword id="KW-0832">Ubl conjugation</keyword>
<accession>Q863G9</accession>
<evidence type="ECO:0000250" key="1">
    <source>
        <dbReference type="UniProtKB" id="P10175"/>
    </source>
</evidence>
<evidence type="ECO:0000250" key="2">
    <source>
        <dbReference type="UniProtKB" id="P10176"/>
    </source>
</evidence>
<evidence type="ECO:0000305" key="3"/>
<feature type="transit peptide" description="Mitochondrion" evidence="2">
    <location>
        <begin position="1"/>
        <end position="25"/>
    </location>
</feature>
<feature type="chain" id="PRO_0000006193" description="Cytochrome c oxidase subunit 8A, mitochondrial">
    <location>
        <begin position="26"/>
        <end position="69"/>
    </location>
</feature>
<feature type="topological domain" description="Mitochondrial matrix" evidence="2">
    <location>
        <begin position="26"/>
        <end position="36"/>
    </location>
</feature>
<feature type="transmembrane region" description="Helical" evidence="1">
    <location>
        <begin position="37"/>
        <end position="60"/>
    </location>
</feature>
<feature type="topological domain" description="Mitochondrial intermembrane" evidence="2">
    <location>
        <begin position="61"/>
        <end position="69"/>
    </location>
</feature>
<feature type="short sequence motif" description="SIFI-degron" evidence="2">
    <location>
        <begin position="2"/>
        <end position="19"/>
    </location>
</feature>
<organism>
    <name type="scientific">Papio anubis</name>
    <name type="common">Olive baboon</name>
    <dbReference type="NCBI Taxonomy" id="9555"/>
    <lineage>
        <taxon>Eukaryota</taxon>
        <taxon>Metazoa</taxon>
        <taxon>Chordata</taxon>
        <taxon>Craniata</taxon>
        <taxon>Vertebrata</taxon>
        <taxon>Euteleostomi</taxon>
        <taxon>Mammalia</taxon>
        <taxon>Eutheria</taxon>
        <taxon>Euarchontoglires</taxon>
        <taxon>Primates</taxon>
        <taxon>Haplorrhini</taxon>
        <taxon>Catarrhini</taxon>
        <taxon>Cercopithecidae</taxon>
        <taxon>Cercopithecinae</taxon>
        <taxon>Papio</taxon>
    </lineage>
</organism>
<name>COX8A_PAPAN</name>
<sequence>MSVLTSLLLRGLTGSARRLPVPRAKVHSMPPEEELGTLEKAIALTSCFVSLFLPAGWILSHLEDYKRPE</sequence>
<proteinExistence type="inferred from homology"/>
<comment type="function">
    <text evidence="1">Component of the cytochrome c oxidase, the last enzyme in the mitochondrial electron transport chain which drives oxidative phosphorylation. The respiratory chain contains 3 multisubunit complexes succinate dehydrogenase (complex II, CII), ubiquinol-cytochrome c oxidoreductase (cytochrome b-c1 complex, complex III, CIII) and cytochrome c oxidase (complex IV, CIV), that cooperate to transfer electrons derived from NADH and succinate to molecular oxygen, creating an electrochemical gradient over the inner membrane that drives transmembrane transport and the ATP synthase. Cytochrome c oxidase is the component of the respiratory chain that catalyzes the reduction of oxygen to water. Electrons originating from reduced cytochrome c in the intermembrane space (IMS) are transferred via the dinuclear copper A center (CU(A)) of subunit 2 and heme A of subunit 1 to the active site in subunit 1, a binuclear center (BNC) formed by heme A3 and copper B (CU(B)). The BNC reduces molecular oxygen to 2 water molecules using 4 electrons from cytochrome c in the IMS and 4 protons from the mitochondrial matrix.</text>
</comment>
<comment type="pathway">
    <text evidence="1">Energy metabolism; oxidative phosphorylation.</text>
</comment>
<comment type="subunit">
    <text evidence="2">Component of the cytochrome c oxidase (complex IV, CIV), a multisubunit enzyme composed of 14 subunits. The complex is composed of a catalytic core of 3 subunits MT-CO1, MT-CO2 and MT-CO3, encoded in the mitochondrial DNA, and 11 supernumerary subunits COX4I, COX5A, COX5B, COX6A, COX6B, COX6C, COX7A, COX7B, COX7C, COX8 and NDUFA4, which are encoded in the nuclear genome. The complex exists as a monomer or a dimer and forms supercomplexes (SCs) in the inner mitochondrial membrane with NADH-ubiquinone oxidoreductase (complex I, CI) and ubiquinol-cytochrome c oxidoreductase (cytochrome b-c1 complex, complex III, CIII), resulting in different assemblies (supercomplex SCI(1)III(2)IV(1) and megacomplex MCI(2)III(2)IV(2)).</text>
</comment>
<comment type="subcellular location">
    <subcellularLocation>
        <location evidence="2">Mitochondrion inner membrane</location>
        <topology evidence="2">Single-pass membrane protein</topology>
    </subcellularLocation>
</comment>
<comment type="PTM">
    <text evidence="2">In response to mitochondrial stress, the precursor protein is ubiquitinated by the SIFI complex in the cytoplasm before mitochondrial import, leading to its degradation. Within the SIFI complex, UBR4 initiates ubiquitin chain that are further elongated or branched by KCMF1.</text>
</comment>
<comment type="similarity">
    <text evidence="3">Belongs to the cytochrome c oxidase VIII family.</text>
</comment>
<protein>
    <recommendedName>
        <fullName>Cytochrome c oxidase subunit 8A, mitochondrial</fullName>
    </recommendedName>
    <alternativeName>
        <fullName>Cytochrome c oxidase polypeptide VIII-liver/heart</fullName>
    </alternativeName>
    <alternativeName>
        <fullName>Cytochrome c oxidase subunit 8-2</fullName>
    </alternativeName>
</protein>
<dbReference type="EMBL" id="AY254817">
    <property type="protein sequence ID" value="AAP32248.1"/>
    <property type="molecule type" value="mRNA"/>
</dbReference>
<dbReference type="RefSeq" id="NP_001106111.1">
    <property type="nucleotide sequence ID" value="NM_001112641.1"/>
</dbReference>
<dbReference type="SMR" id="Q863G9"/>
<dbReference type="STRING" id="9555.ENSPANP00000046331"/>
<dbReference type="Ensembl" id="ENSPANT00000064263.1">
    <property type="protein sequence ID" value="ENSPANP00000048066.1"/>
    <property type="gene ID" value="ENSPANG00000039572.1"/>
</dbReference>
<dbReference type="GeneID" id="100126727"/>
<dbReference type="KEGG" id="panu:100126727"/>
<dbReference type="CTD" id="1351"/>
<dbReference type="eggNOG" id="ENOG502SA62">
    <property type="taxonomic scope" value="Eukaryota"/>
</dbReference>
<dbReference type="GeneTree" id="ENSGT00390000006255"/>
<dbReference type="HOGENOM" id="CLU_203368_0_0_1"/>
<dbReference type="OMA" id="AQVHSMP"/>
<dbReference type="OrthoDB" id="15835at314294"/>
<dbReference type="UniPathway" id="UPA00705"/>
<dbReference type="Proteomes" id="UP000028761">
    <property type="component" value="Chromosome 12"/>
</dbReference>
<dbReference type="Bgee" id="ENSPANG00000034851">
    <property type="expression patterns" value="Expressed in adult mammalian kidney and 68 other cell types or tissues"/>
</dbReference>
<dbReference type="GO" id="GO:0005743">
    <property type="term" value="C:mitochondrial inner membrane"/>
    <property type="evidence" value="ECO:0007669"/>
    <property type="project" value="UniProtKB-SubCell"/>
</dbReference>
<dbReference type="GO" id="GO:0045277">
    <property type="term" value="C:respiratory chain complex IV"/>
    <property type="evidence" value="ECO:0007669"/>
    <property type="project" value="InterPro"/>
</dbReference>
<dbReference type="GO" id="GO:0006123">
    <property type="term" value="P:mitochondrial electron transport, cytochrome c to oxygen"/>
    <property type="evidence" value="ECO:0007669"/>
    <property type="project" value="InterPro"/>
</dbReference>
<dbReference type="FunFam" id="4.10.81.10:FF:000001">
    <property type="entry name" value="Cytochrome c oxidase subunit 8B, mitochondrial"/>
    <property type="match status" value="1"/>
</dbReference>
<dbReference type="Gene3D" id="4.10.81.10">
    <property type="entry name" value="Cytochrome c oxidase, subunit 8"/>
    <property type="match status" value="1"/>
</dbReference>
<dbReference type="InterPro" id="IPR003205">
    <property type="entry name" value="Cyt_c_oxidase_su8"/>
</dbReference>
<dbReference type="InterPro" id="IPR036548">
    <property type="entry name" value="Cyt_c_oxidase_su8_sf"/>
</dbReference>
<dbReference type="PANTHER" id="PTHR16717">
    <property type="entry name" value="CYTOCHROME C OXIDASE POLYPEPTIDE VIII"/>
    <property type="match status" value="1"/>
</dbReference>
<dbReference type="PANTHER" id="PTHR16717:SF1">
    <property type="entry name" value="CYTOCHROME C OXIDASE SUBUNIT 8A, MITOCHONDRIAL"/>
    <property type="match status" value="1"/>
</dbReference>
<dbReference type="Pfam" id="PF02285">
    <property type="entry name" value="COX8"/>
    <property type="match status" value="1"/>
</dbReference>
<dbReference type="SUPFAM" id="SSF81431">
    <property type="entry name" value="Mitochondrial cytochrome c oxidase subunit VIIIb (aka IX)"/>
    <property type="match status" value="1"/>
</dbReference>
<reference key="1">
    <citation type="journal article" date="2003" name="Proc. Natl. Acad. Sci. U.S.A.">
        <title>Adaptive evolution of cytochrome c oxidase subunit VIII in anthropoid primates.</title>
        <authorList>
            <person name="Goldberg A."/>
            <person name="Wildman D.E."/>
            <person name="Schmidt T.R."/>
            <person name="Huttemann M."/>
            <person name="Goodman M."/>
            <person name="Weiss M.L."/>
            <person name="Grossman L.I."/>
        </authorList>
    </citation>
    <scope>NUCLEOTIDE SEQUENCE [MRNA]</scope>
</reference>